<organism>
    <name type="scientific">Listeria monocytogenes serovar 1/2a (strain ATCC BAA-679 / EGD-e)</name>
    <dbReference type="NCBI Taxonomy" id="169963"/>
    <lineage>
        <taxon>Bacteria</taxon>
        <taxon>Bacillati</taxon>
        <taxon>Bacillota</taxon>
        <taxon>Bacilli</taxon>
        <taxon>Bacillales</taxon>
        <taxon>Listeriaceae</taxon>
        <taxon>Listeria</taxon>
    </lineage>
</organism>
<evidence type="ECO:0000255" key="1">
    <source>
        <dbReference type="HAMAP-Rule" id="MF_00020"/>
    </source>
</evidence>
<accession>Q8Y6V0</accession>
<feature type="chain" id="PRO_0000107579" description="Acetate kinase 1">
    <location>
        <begin position="1"/>
        <end position="397"/>
    </location>
</feature>
<feature type="active site" description="Proton donor/acceptor" evidence="1">
    <location>
        <position position="146"/>
    </location>
</feature>
<feature type="binding site" evidence="1">
    <location>
        <position position="8"/>
    </location>
    <ligand>
        <name>Mg(2+)</name>
        <dbReference type="ChEBI" id="CHEBI:18420"/>
    </ligand>
</feature>
<feature type="binding site" evidence="1">
    <location>
        <position position="15"/>
    </location>
    <ligand>
        <name>ATP</name>
        <dbReference type="ChEBI" id="CHEBI:30616"/>
    </ligand>
</feature>
<feature type="binding site" evidence="1">
    <location>
        <position position="89"/>
    </location>
    <ligand>
        <name>substrate</name>
    </ligand>
</feature>
<feature type="binding site" evidence="1">
    <location>
        <begin position="206"/>
        <end position="210"/>
    </location>
    <ligand>
        <name>ATP</name>
        <dbReference type="ChEBI" id="CHEBI:30616"/>
    </ligand>
</feature>
<feature type="binding site" evidence="1">
    <location>
        <begin position="281"/>
        <end position="283"/>
    </location>
    <ligand>
        <name>ATP</name>
        <dbReference type="ChEBI" id="CHEBI:30616"/>
    </ligand>
</feature>
<feature type="binding site" evidence="1">
    <location>
        <begin position="329"/>
        <end position="333"/>
    </location>
    <ligand>
        <name>ATP</name>
        <dbReference type="ChEBI" id="CHEBI:30616"/>
    </ligand>
</feature>
<feature type="binding site" evidence="1">
    <location>
        <position position="382"/>
    </location>
    <ligand>
        <name>Mg(2+)</name>
        <dbReference type="ChEBI" id="CHEBI:18420"/>
    </ligand>
</feature>
<feature type="site" description="Transition state stabilizer" evidence="1">
    <location>
        <position position="178"/>
    </location>
</feature>
<feature type="site" description="Transition state stabilizer" evidence="1">
    <location>
        <position position="239"/>
    </location>
</feature>
<proteinExistence type="inferred from homology"/>
<dbReference type="EC" id="2.7.2.1" evidence="1"/>
<dbReference type="EMBL" id="AL591979">
    <property type="protein sequence ID" value="CAC99659.1"/>
    <property type="molecule type" value="Genomic_DNA"/>
</dbReference>
<dbReference type="PIR" id="AE1272">
    <property type="entry name" value="AE1272"/>
</dbReference>
<dbReference type="RefSeq" id="WP_010989750.1">
    <property type="nucleotide sequence ID" value="NZ_CP149495.1"/>
</dbReference>
<dbReference type="SMR" id="Q8Y6V0"/>
<dbReference type="STRING" id="169963.gene:17594238"/>
<dbReference type="PaxDb" id="169963-lmo1581"/>
<dbReference type="EnsemblBacteria" id="CAC99659">
    <property type="protein sequence ID" value="CAC99659"/>
    <property type="gene ID" value="CAC99659"/>
</dbReference>
<dbReference type="KEGG" id="lmo:lmo1581"/>
<dbReference type="PATRIC" id="fig|169963.11.peg.1623"/>
<dbReference type="eggNOG" id="COG0282">
    <property type="taxonomic scope" value="Bacteria"/>
</dbReference>
<dbReference type="HOGENOM" id="CLU_020352_0_1_9"/>
<dbReference type="OrthoDB" id="9802453at2"/>
<dbReference type="PhylomeDB" id="Q8Y6V0"/>
<dbReference type="BioCyc" id="LMON169963:LMO1581-MONOMER"/>
<dbReference type="UniPathway" id="UPA00340">
    <property type="reaction ID" value="UER00458"/>
</dbReference>
<dbReference type="Proteomes" id="UP000000817">
    <property type="component" value="Chromosome"/>
</dbReference>
<dbReference type="GO" id="GO:0005737">
    <property type="term" value="C:cytoplasm"/>
    <property type="evidence" value="ECO:0007669"/>
    <property type="project" value="UniProtKB-SubCell"/>
</dbReference>
<dbReference type="GO" id="GO:0008776">
    <property type="term" value="F:acetate kinase activity"/>
    <property type="evidence" value="ECO:0000318"/>
    <property type="project" value="GO_Central"/>
</dbReference>
<dbReference type="GO" id="GO:0005524">
    <property type="term" value="F:ATP binding"/>
    <property type="evidence" value="ECO:0007669"/>
    <property type="project" value="UniProtKB-KW"/>
</dbReference>
<dbReference type="GO" id="GO:0000287">
    <property type="term" value="F:magnesium ion binding"/>
    <property type="evidence" value="ECO:0007669"/>
    <property type="project" value="UniProtKB-UniRule"/>
</dbReference>
<dbReference type="GO" id="GO:0006083">
    <property type="term" value="P:acetate metabolic process"/>
    <property type="evidence" value="ECO:0000318"/>
    <property type="project" value="GO_Central"/>
</dbReference>
<dbReference type="GO" id="GO:0006085">
    <property type="term" value="P:acetyl-CoA biosynthetic process"/>
    <property type="evidence" value="ECO:0007669"/>
    <property type="project" value="UniProtKB-UniRule"/>
</dbReference>
<dbReference type="CDD" id="cd24010">
    <property type="entry name" value="ASKHA_NBD_AcK_PK"/>
    <property type="match status" value="1"/>
</dbReference>
<dbReference type="Gene3D" id="3.30.420.40">
    <property type="match status" value="2"/>
</dbReference>
<dbReference type="HAMAP" id="MF_00020">
    <property type="entry name" value="Acetate_kinase"/>
    <property type="match status" value="1"/>
</dbReference>
<dbReference type="InterPro" id="IPR004372">
    <property type="entry name" value="Ac/propionate_kinase"/>
</dbReference>
<dbReference type="InterPro" id="IPR000890">
    <property type="entry name" value="Aliphatic_acid_kin_short-chain"/>
</dbReference>
<dbReference type="InterPro" id="IPR023865">
    <property type="entry name" value="Aliphatic_acid_kinase_CS"/>
</dbReference>
<dbReference type="InterPro" id="IPR043129">
    <property type="entry name" value="ATPase_NBD"/>
</dbReference>
<dbReference type="NCBIfam" id="TIGR00016">
    <property type="entry name" value="ackA"/>
    <property type="match status" value="1"/>
</dbReference>
<dbReference type="PANTHER" id="PTHR21060">
    <property type="entry name" value="ACETATE KINASE"/>
    <property type="match status" value="1"/>
</dbReference>
<dbReference type="PANTHER" id="PTHR21060:SF15">
    <property type="entry name" value="ACETATE KINASE-RELATED"/>
    <property type="match status" value="1"/>
</dbReference>
<dbReference type="Pfam" id="PF00871">
    <property type="entry name" value="Acetate_kinase"/>
    <property type="match status" value="1"/>
</dbReference>
<dbReference type="PIRSF" id="PIRSF000722">
    <property type="entry name" value="Acetate_prop_kin"/>
    <property type="match status" value="1"/>
</dbReference>
<dbReference type="PRINTS" id="PR00471">
    <property type="entry name" value="ACETATEKNASE"/>
</dbReference>
<dbReference type="SUPFAM" id="SSF53067">
    <property type="entry name" value="Actin-like ATPase domain"/>
    <property type="match status" value="2"/>
</dbReference>
<dbReference type="PROSITE" id="PS01075">
    <property type="entry name" value="ACETATE_KINASE_1"/>
    <property type="match status" value="1"/>
</dbReference>
<dbReference type="PROSITE" id="PS01076">
    <property type="entry name" value="ACETATE_KINASE_2"/>
    <property type="match status" value="1"/>
</dbReference>
<gene>
    <name evidence="1" type="primary">ackA1</name>
    <name type="ordered locus">lmo1581</name>
</gene>
<name>ACKA1_LISMO</name>
<comment type="function">
    <text evidence="1">Catalyzes the formation of acetyl phosphate from acetate and ATP. Can also catalyze the reverse reaction.</text>
</comment>
<comment type="catalytic activity">
    <reaction evidence="1">
        <text>acetate + ATP = acetyl phosphate + ADP</text>
        <dbReference type="Rhea" id="RHEA:11352"/>
        <dbReference type="ChEBI" id="CHEBI:22191"/>
        <dbReference type="ChEBI" id="CHEBI:30089"/>
        <dbReference type="ChEBI" id="CHEBI:30616"/>
        <dbReference type="ChEBI" id="CHEBI:456216"/>
        <dbReference type="EC" id="2.7.2.1"/>
    </reaction>
</comment>
<comment type="cofactor">
    <cofactor evidence="1">
        <name>Mg(2+)</name>
        <dbReference type="ChEBI" id="CHEBI:18420"/>
    </cofactor>
    <cofactor evidence="1">
        <name>Mn(2+)</name>
        <dbReference type="ChEBI" id="CHEBI:29035"/>
    </cofactor>
    <text evidence="1">Mg(2+). Can also accept Mn(2+).</text>
</comment>
<comment type="pathway">
    <text evidence="1">Metabolic intermediate biosynthesis; acetyl-CoA biosynthesis; acetyl-CoA from acetate: step 1/2.</text>
</comment>
<comment type="subunit">
    <text evidence="1">Homodimer.</text>
</comment>
<comment type="subcellular location">
    <subcellularLocation>
        <location evidence="1">Cytoplasm</location>
    </subcellularLocation>
</comment>
<comment type="similarity">
    <text evidence="1">Belongs to the acetokinase family.</text>
</comment>
<sequence>MEKTIAINAGSSSLKFQLYDMPSERVITAGIVERIGLKDSIFTITVDGEKIKEIIDIPDHEIAVQMLLEKLINHKVIGSYDEITGIGHRVVHGGERFPESVYIDDQVIKDIEALSELAPLHNPANVTGIKAFRKILPDVVSVAVFDTAFHQTMPPASYLYSLPYSYYEDYGIRKYGFHGTSHKYVSERAAELLGRPVEELRLLTCHLGNGASIAAIEGGKSMDTSMGFTPLAGVSMGTRSGNIDPALIPFIMEKTGKTAEQVLDVLNKESGMLGVSGISSDLRDLEDEAAKGNDRAELALQVFVDRIHKYIGSYAARMNGVDAIIFTAGIGENSSYIREKVLRGLEFMGVYWDPALNQVRGEERFLNYPHSPVKVIIIPTNEELMIARDVETIKNNR</sequence>
<reference key="1">
    <citation type="journal article" date="2001" name="Science">
        <title>Comparative genomics of Listeria species.</title>
        <authorList>
            <person name="Glaser P."/>
            <person name="Frangeul L."/>
            <person name="Buchrieser C."/>
            <person name="Rusniok C."/>
            <person name="Amend A."/>
            <person name="Baquero F."/>
            <person name="Berche P."/>
            <person name="Bloecker H."/>
            <person name="Brandt P."/>
            <person name="Chakraborty T."/>
            <person name="Charbit A."/>
            <person name="Chetouani F."/>
            <person name="Couve E."/>
            <person name="de Daruvar A."/>
            <person name="Dehoux P."/>
            <person name="Domann E."/>
            <person name="Dominguez-Bernal G."/>
            <person name="Duchaud E."/>
            <person name="Durant L."/>
            <person name="Dussurget O."/>
            <person name="Entian K.-D."/>
            <person name="Fsihi H."/>
            <person name="Garcia-del Portillo F."/>
            <person name="Garrido P."/>
            <person name="Gautier L."/>
            <person name="Goebel W."/>
            <person name="Gomez-Lopez N."/>
            <person name="Hain T."/>
            <person name="Hauf J."/>
            <person name="Jackson D."/>
            <person name="Jones L.-M."/>
            <person name="Kaerst U."/>
            <person name="Kreft J."/>
            <person name="Kuhn M."/>
            <person name="Kunst F."/>
            <person name="Kurapkat G."/>
            <person name="Madueno E."/>
            <person name="Maitournam A."/>
            <person name="Mata Vicente J."/>
            <person name="Ng E."/>
            <person name="Nedjari H."/>
            <person name="Nordsiek G."/>
            <person name="Novella S."/>
            <person name="de Pablos B."/>
            <person name="Perez-Diaz J.-C."/>
            <person name="Purcell R."/>
            <person name="Remmel B."/>
            <person name="Rose M."/>
            <person name="Schlueter T."/>
            <person name="Simoes N."/>
            <person name="Tierrez A."/>
            <person name="Vazquez-Boland J.-A."/>
            <person name="Voss H."/>
            <person name="Wehland J."/>
            <person name="Cossart P."/>
        </authorList>
    </citation>
    <scope>NUCLEOTIDE SEQUENCE [LARGE SCALE GENOMIC DNA]</scope>
    <source>
        <strain>ATCC BAA-679 / EGD-e</strain>
    </source>
</reference>
<keyword id="KW-0067">ATP-binding</keyword>
<keyword id="KW-0963">Cytoplasm</keyword>
<keyword id="KW-0418">Kinase</keyword>
<keyword id="KW-0460">Magnesium</keyword>
<keyword id="KW-0479">Metal-binding</keyword>
<keyword id="KW-0547">Nucleotide-binding</keyword>
<keyword id="KW-1185">Reference proteome</keyword>
<keyword id="KW-0808">Transferase</keyword>
<protein>
    <recommendedName>
        <fullName evidence="1">Acetate kinase 1</fullName>
        <ecNumber evidence="1">2.7.2.1</ecNumber>
    </recommendedName>
    <alternativeName>
        <fullName evidence="1">Acetokinase 1</fullName>
    </alternativeName>
</protein>